<feature type="chain" id="PRO_0000433304" description="D-ribitol-5-phosphate phosphatase">
    <location>
        <begin position="1"/>
        <end position="206"/>
    </location>
</feature>
<feature type="active site" description="Nucleophile" evidence="2">
    <location>
        <position position="8"/>
    </location>
</feature>
<feature type="binding site" evidence="1">
    <location>
        <position position="8"/>
    </location>
    <ligand>
        <name>Mg(2+)</name>
        <dbReference type="ChEBI" id="CHEBI:18420"/>
    </ligand>
</feature>
<feature type="binding site" evidence="1">
    <location>
        <position position="172"/>
    </location>
    <ligand>
        <name>Mg(2+)</name>
        <dbReference type="ChEBI" id="CHEBI:18420"/>
    </ligand>
</feature>
<feature type="strand" evidence="7">
    <location>
        <begin position="4"/>
        <end position="7"/>
    </location>
</feature>
<feature type="turn" evidence="7">
    <location>
        <begin position="11"/>
        <end position="13"/>
    </location>
</feature>
<feature type="helix" evidence="7">
    <location>
        <begin position="18"/>
        <end position="27"/>
    </location>
</feature>
<feature type="helix" evidence="7">
    <location>
        <begin position="33"/>
        <end position="36"/>
    </location>
</feature>
<feature type="helix" evidence="7">
    <location>
        <begin position="44"/>
        <end position="50"/>
    </location>
</feature>
<feature type="helix" evidence="7">
    <location>
        <begin position="56"/>
        <end position="67"/>
    </location>
</feature>
<feature type="helix" evidence="7">
    <location>
        <begin position="73"/>
        <end position="81"/>
    </location>
</feature>
<feature type="helix" evidence="7">
    <location>
        <begin position="89"/>
        <end position="98"/>
    </location>
</feature>
<feature type="turn" evidence="7">
    <location>
        <begin position="99"/>
        <end position="101"/>
    </location>
</feature>
<feature type="strand" evidence="7">
    <location>
        <begin position="102"/>
        <end position="108"/>
    </location>
</feature>
<feature type="helix" evidence="7">
    <location>
        <begin position="112"/>
        <end position="118"/>
    </location>
</feature>
<feature type="helix" evidence="7">
    <location>
        <begin position="121"/>
        <end position="123"/>
    </location>
</feature>
<feature type="helix" evidence="7">
    <location>
        <begin position="130"/>
        <end position="133"/>
    </location>
</feature>
<feature type="strand" evidence="7">
    <location>
        <begin position="134"/>
        <end position="139"/>
    </location>
</feature>
<feature type="helix" evidence="7">
    <location>
        <begin position="140"/>
        <end position="143"/>
    </location>
</feature>
<feature type="helix" evidence="7">
    <location>
        <begin position="150"/>
        <end position="160"/>
    </location>
</feature>
<feature type="helix" evidence="7">
    <location>
        <begin position="164"/>
        <end position="166"/>
    </location>
</feature>
<feature type="strand" evidence="7">
    <location>
        <begin position="167"/>
        <end position="170"/>
    </location>
</feature>
<feature type="helix" evidence="7">
    <location>
        <begin position="174"/>
        <end position="182"/>
    </location>
</feature>
<feature type="strand" evidence="7">
    <location>
        <begin position="186"/>
        <end position="188"/>
    </location>
</feature>
<feature type="helix" evidence="7">
    <location>
        <begin position="197"/>
        <end position="204"/>
    </location>
</feature>
<organism>
    <name type="scientific">Bacteroides thetaiotaomicron (strain ATCC 29148 / DSM 2079 / JCM 5827 / CCUG 10774 / NCTC 10582 / VPI-5482 / E50)</name>
    <dbReference type="NCBI Taxonomy" id="226186"/>
    <lineage>
        <taxon>Bacteria</taxon>
        <taxon>Pseudomonadati</taxon>
        <taxon>Bacteroidota</taxon>
        <taxon>Bacteroidia</taxon>
        <taxon>Bacteroidales</taxon>
        <taxon>Bacteroidaceae</taxon>
        <taxon>Bacteroides</taxon>
    </lineage>
</organism>
<protein>
    <recommendedName>
        <fullName evidence="5">D-ribitol-5-phosphate phosphatase</fullName>
        <ecNumber evidence="3">3.1.3.-</ecNumber>
    </recommendedName>
    <alternativeName>
        <fullName evidence="5">5-amino-6-(5-phospho-D-ribitylamino)uracil phosphatase</fullName>
        <ecNumber evidence="3">3.1.3.104</ecNumber>
    </alternativeName>
</protein>
<sequence length="206" mass="23545">MIKNIVFDFGGVIVDIDRDKAVQAFIKLGLADADTRLDKYHQTGIFQELEEGKLSADEFRKQLGDLCGRELTMEETKQAWLGFFNEVDLRKLDYILGLRKSYHVYLLSNTNPFVMSWACSPEFSSEGKPLNDYCDKLYLSYQLGHTKPAPEIFDFMIKDSHVIPSETLFVDDGSSNIHIGKELGFETFQPENGADWRQELTVILNS</sequence>
<comment type="function">
    <text evidence="3">Catalyzes the dephosphorylation of D-ribitol-5-phosphate and D-ribitol-1-phosphate. Is also able to dephosphorylate 5-amino-6-(5-phospho-D-ribitylamino)uracil, and thus could be involved in the riboflavin biosynthesis pathway.</text>
</comment>
<comment type="catalytic activity">
    <reaction evidence="3">
        <text>D-ribitol 1-phosphate + H2O = ribitol + phosphate</text>
        <dbReference type="Rhea" id="RHEA:47652"/>
        <dbReference type="ChEBI" id="CHEBI:15377"/>
        <dbReference type="ChEBI" id="CHEBI:15963"/>
        <dbReference type="ChEBI" id="CHEBI:43474"/>
        <dbReference type="ChEBI" id="CHEBI:87817"/>
    </reaction>
</comment>
<comment type="catalytic activity">
    <reaction evidence="3">
        <text>D-ribitol 5-phosphate + H2O = ribitol + phosphate</text>
        <dbReference type="Rhea" id="RHEA:47648"/>
        <dbReference type="ChEBI" id="CHEBI:15377"/>
        <dbReference type="ChEBI" id="CHEBI:15963"/>
        <dbReference type="ChEBI" id="CHEBI:43474"/>
        <dbReference type="ChEBI" id="CHEBI:57695"/>
    </reaction>
</comment>
<comment type="catalytic activity">
    <reaction evidence="3">
        <text>5-amino-6-(5-phospho-D-ribitylamino)uracil + H2O = 5-amino-6-(D-ribitylamino)uracil + phosphate</text>
        <dbReference type="Rhea" id="RHEA:25197"/>
        <dbReference type="ChEBI" id="CHEBI:15377"/>
        <dbReference type="ChEBI" id="CHEBI:15934"/>
        <dbReference type="ChEBI" id="CHEBI:43474"/>
        <dbReference type="ChEBI" id="CHEBI:58421"/>
        <dbReference type="EC" id="3.1.3.104"/>
    </reaction>
</comment>
<comment type="cofactor">
    <cofactor evidence="2">
        <name>Mg(2+)</name>
        <dbReference type="ChEBI" id="CHEBI:18420"/>
    </cofactor>
</comment>
<comment type="biophysicochemical properties">
    <kinetics>
        <KM evidence="3">1030 uM for D-ribitol-1-phosphate</KM>
        <KM evidence="3">1080 uM for D-ribitol-5-phosphate</KM>
        <KM evidence="3">102.5 uM for 5-amino-6-(5-phospho-D-ribitylamino)uracil</KM>
        <text evidence="3">kcat is 1.8 sec(-1) with D-ribitol-1-phosphate as substrate. kcat is 1.5 sec(-1) with D-ribitol-5-phosphate as substrate. kcat is 0.016 sec(-1) with 5-amino-6-(5-phospho-D-ribitylamino)uracil as substrate.</text>
    </kinetics>
</comment>
<comment type="pathway">
    <text evidence="5">Cofactor biosynthesis; riboflavin biosynthesis; 5-amino-6-(D-ribitylamino)uracil from GTP: step 4/4.</text>
</comment>
<comment type="similarity">
    <text evidence="4">Belongs to the HAD-like hydrolase superfamily.</text>
</comment>
<reference key="1">
    <citation type="journal article" date="2003" name="Science">
        <title>A genomic view of the human-Bacteroides thetaiotaomicron symbiosis.</title>
        <authorList>
            <person name="Xu J."/>
            <person name="Bjursell M.K."/>
            <person name="Himrod J."/>
            <person name="Deng S."/>
            <person name="Carmichael L.K."/>
            <person name="Chiang H.C."/>
            <person name="Hooper L.V."/>
            <person name="Gordon J.I."/>
        </authorList>
    </citation>
    <scope>NUCLEOTIDE SEQUENCE [LARGE SCALE GENOMIC DNA]</scope>
    <source>
        <strain>ATCC 29148 / DSM 2079 / JCM 5827 / CCUG 10774 / NCTC 10582 / VPI-5482 / E50</strain>
    </source>
</reference>
<reference key="2">
    <citation type="journal article" date="2015" name="Biochemistry">
        <title>Covalent docking predicts substrates for haloalkanoate dehalogenase superfamily phosphatases.</title>
        <authorList>
            <person name="London N."/>
            <person name="Farelli J.D."/>
            <person name="Brown S.D."/>
            <person name="Liu C."/>
            <person name="Huang H."/>
            <person name="Korczynska M."/>
            <person name="Al-Obaidi N.F."/>
            <person name="Babbitt P.C."/>
            <person name="Almo S.C."/>
            <person name="Allen K.N."/>
            <person name="Shoichet B.K."/>
        </authorList>
    </citation>
    <scope>FUNCTION</scope>
    <scope>CATALYTIC ACTIVITY</scope>
    <scope>BIOPHYSICOCHEMICAL PROPERTIES</scope>
    <scope>PATHWAY</scope>
</reference>
<reference key="3">
    <citation type="submission" date="2013-02" db="PDB data bank">
        <title>Crystal structure of BT_0970, a had family phosphatase from Bacteroides thetaiotaomicron VPI-5482, TARGET EFI-501083, with bound sodium and glycerol, closed lid, ordered loop.</title>
        <authorList>
            <consortium name="Enzyme Function Initiative (EFI)"/>
            <person name="Vetting M.W."/>
            <person name="Toro R."/>
            <person name="Bhosle R."/>
            <person name="Kumar P.R."/>
            <person name="Ghosh A."/>
            <person name="Al Obaidi N.F."/>
            <person name="Stead M."/>
            <person name="Washington E."/>
            <person name="Scott Glenn A."/>
            <person name="Chowdhury S."/>
            <person name="Evans B."/>
            <person name="Hammonds J."/>
            <person name="Hillerich B."/>
            <person name="Love J."/>
            <person name="Seidel R.D."/>
            <person name="Imker H.J."/>
            <person name="Dunaway-Mariano D."/>
            <person name="Allen K.N."/>
            <person name="Gerlt J.A."/>
            <person name="Almo S.C."/>
        </authorList>
    </citation>
    <scope>X-RAY CRYSTALLOGRAPHY (1.50 ANGSTROMS)</scope>
</reference>
<name>RIBX_BACTN</name>
<keyword id="KW-0002">3D-structure</keyword>
<keyword id="KW-0378">Hydrolase</keyword>
<keyword id="KW-0460">Magnesium</keyword>
<keyword id="KW-0479">Metal-binding</keyword>
<keyword id="KW-1185">Reference proteome</keyword>
<accession>Q8A947</accession>
<evidence type="ECO:0000250" key="1"/>
<evidence type="ECO:0000250" key="2">
    <source>
        <dbReference type="UniProtKB" id="P0A8Y3"/>
    </source>
</evidence>
<evidence type="ECO:0000269" key="3">
    <source>
    </source>
</evidence>
<evidence type="ECO:0000305" key="4"/>
<evidence type="ECO:0000305" key="5">
    <source>
    </source>
</evidence>
<evidence type="ECO:0000312" key="6">
    <source>
        <dbReference type="EMBL" id="AAO76077.1"/>
    </source>
</evidence>
<evidence type="ECO:0007829" key="7">
    <source>
        <dbReference type="PDB" id="4JB3"/>
    </source>
</evidence>
<proteinExistence type="evidence at protein level"/>
<gene>
    <name evidence="6" type="ordered locus">BT_0970</name>
</gene>
<dbReference type="EC" id="3.1.3.-" evidence="3"/>
<dbReference type="EC" id="3.1.3.104" evidence="3"/>
<dbReference type="EMBL" id="AE015928">
    <property type="protein sequence ID" value="AAO76077.1"/>
    <property type="molecule type" value="Genomic_DNA"/>
</dbReference>
<dbReference type="RefSeq" id="NP_809883.1">
    <property type="nucleotide sequence ID" value="NC_004663.1"/>
</dbReference>
<dbReference type="RefSeq" id="WP_008761607.1">
    <property type="nucleotide sequence ID" value="NC_004663.1"/>
</dbReference>
<dbReference type="PDB" id="4JB3">
    <property type="method" value="X-ray"/>
    <property type="resolution" value="1.50 A"/>
    <property type="chains" value="A=1-206"/>
</dbReference>
<dbReference type="PDBsum" id="4JB3"/>
<dbReference type="SMR" id="Q8A947"/>
<dbReference type="FunCoup" id="Q8A947">
    <property type="interactions" value="32"/>
</dbReference>
<dbReference type="STRING" id="226186.BT_0970"/>
<dbReference type="PaxDb" id="226186-BT_0970"/>
<dbReference type="DNASU" id="1073603"/>
<dbReference type="EnsemblBacteria" id="AAO76077">
    <property type="protein sequence ID" value="AAO76077"/>
    <property type="gene ID" value="BT_0970"/>
</dbReference>
<dbReference type="GeneID" id="60926946"/>
<dbReference type="KEGG" id="bth:BT_0970"/>
<dbReference type="PATRIC" id="fig|226186.12.peg.986"/>
<dbReference type="eggNOG" id="COG1011">
    <property type="taxonomic scope" value="Bacteria"/>
</dbReference>
<dbReference type="HOGENOM" id="CLU_045011_9_5_10"/>
<dbReference type="InParanoid" id="Q8A947"/>
<dbReference type="OrthoDB" id="9797415at2"/>
<dbReference type="BRENDA" id="3.1.3.104">
    <property type="organism ID" value="709"/>
</dbReference>
<dbReference type="UniPathway" id="UPA00275">
    <property type="reaction ID" value="UER00403"/>
</dbReference>
<dbReference type="EvolutionaryTrace" id="Q8A947"/>
<dbReference type="Proteomes" id="UP000001414">
    <property type="component" value="Chromosome"/>
</dbReference>
<dbReference type="GO" id="GO:0043726">
    <property type="term" value="F:5-amino-6-(5-phosphoribitylamino)uracil phosphatase activity"/>
    <property type="evidence" value="ECO:0000314"/>
    <property type="project" value="UniProtKB"/>
</dbReference>
<dbReference type="GO" id="GO:0046872">
    <property type="term" value="F:metal ion binding"/>
    <property type="evidence" value="ECO:0007669"/>
    <property type="project" value="UniProtKB-KW"/>
</dbReference>
<dbReference type="GO" id="GO:0110130">
    <property type="term" value="F:ribitol-5-phosphatase activity"/>
    <property type="evidence" value="ECO:0007669"/>
    <property type="project" value="RHEA"/>
</dbReference>
<dbReference type="GO" id="GO:0016311">
    <property type="term" value="P:dephosphorylation"/>
    <property type="evidence" value="ECO:0000314"/>
    <property type="project" value="UniProtKB"/>
</dbReference>
<dbReference type="GO" id="GO:0009231">
    <property type="term" value="P:riboflavin biosynthetic process"/>
    <property type="evidence" value="ECO:0000317"/>
    <property type="project" value="UniProtKB"/>
</dbReference>
<dbReference type="CDD" id="cd02603">
    <property type="entry name" value="HAD_sEH-N_like"/>
    <property type="match status" value="1"/>
</dbReference>
<dbReference type="Gene3D" id="3.40.50.1000">
    <property type="entry name" value="HAD superfamily/HAD-like"/>
    <property type="match status" value="1"/>
</dbReference>
<dbReference type="Gene3D" id="1.10.150.240">
    <property type="entry name" value="Putative phosphatase, domain 2"/>
    <property type="match status" value="1"/>
</dbReference>
<dbReference type="InterPro" id="IPR036412">
    <property type="entry name" value="HAD-like_sf"/>
</dbReference>
<dbReference type="InterPro" id="IPR006439">
    <property type="entry name" value="HAD-SF_hydro_IA"/>
</dbReference>
<dbReference type="InterPro" id="IPR023214">
    <property type="entry name" value="HAD_sf"/>
</dbReference>
<dbReference type="InterPro" id="IPR023198">
    <property type="entry name" value="PGP-like_dom2"/>
</dbReference>
<dbReference type="NCBIfam" id="TIGR01509">
    <property type="entry name" value="HAD-SF-IA-v3"/>
    <property type="match status" value="1"/>
</dbReference>
<dbReference type="PANTHER" id="PTHR43611">
    <property type="entry name" value="ALPHA-D-GLUCOSE 1-PHOSPHATE PHOSPHATASE"/>
    <property type="match status" value="1"/>
</dbReference>
<dbReference type="PANTHER" id="PTHR43611:SF3">
    <property type="entry name" value="FLAVIN MONONUCLEOTIDE HYDROLASE 1, CHLOROPLATIC"/>
    <property type="match status" value="1"/>
</dbReference>
<dbReference type="Pfam" id="PF00702">
    <property type="entry name" value="Hydrolase"/>
    <property type="match status" value="1"/>
</dbReference>
<dbReference type="PRINTS" id="PR00413">
    <property type="entry name" value="HADHALOGNASE"/>
</dbReference>
<dbReference type="SFLD" id="SFLDG01129">
    <property type="entry name" value="C1.5:_HAD__Beta-PGM__Phosphata"/>
    <property type="match status" value="1"/>
</dbReference>
<dbReference type="SFLD" id="SFLDS00003">
    <property type="entry name" value="Haloacid_Dehalogenase"/>
    <property type="match status" value="1"/>
</dbReference>
<dbReference type="SUPFAM" id="SSF56784">
    <property type="entry name" value="HAD-like"/>
    <property type="match status" value="1"/>
</dbReference>